<sequence>MKVLGIESSCDETGVAVYDTALSGVPALRAHAVYSQIALHAEYGGVVPELASRDHVRKLLPLIRQTLGEAGLRIDELDGVAYTAGPGLVGALLVGAGVARSLAWALDVPAIGVHHMEGHLLAPLMEDDPPQAPFVALLVSGGHTQLVSVKALGSYEVLGETLDDAAGEAFDKTAKMMGLPYPGGPQLAALAETGTPGRYKFARPMTDRPGLDFSFSGLKTQVLLAWRSSDQSDTTRADIARGFEDAVVETLAIKCLRALDAAGCNTLVVAGGVGANKRLRARLQEAAQRRGGRVCFPRPALCTDNGAMIAFAGALRLQAGEHADAAVHVTPRWDMACLPPLAAARESGVGNRE</sequence>
<evidence type="ECO:0000255" key="1">
    <source>
        <dbReference type="HAMAP-Rule" id="MF_01445"/>
    </source>
</evidence>
<gene>
    <name evidence="1" type="primary">tsaD</name>
    <name type="synonym">gcp</name>
    <name type="ordered locus">XCV3990</name>
</gene>
<name>TSAD_XANE5</name>
<proteinExistence type="inferred from homology"/>
<comment type="function">
    <text evidence="1">Required for the formation of a threonylcarbamoyl group on adenosine at position 37 (t(6)A37) in tRNAs that read codons beginning with adenine. Is involved in the transfer of the threonylcarbamoyl moiety of threonylcarbamoyl-AMP (TC-AMP) to the N6 group of A37, together with TsaE and TsaB. TsaD likely plays a direct catalytic role in this reaction.</text>
</comment>
<comment type="catalytic activity">
    <reaction evidence="1">
        <text>L-threonylcarbamoyladenylate + adenosine(37) in tRNA = N(6)-L-threonylcarbamoyladenosine(37) in tRNA + AMP + H(+)</text>
        <dbReference type="Rhea" id="RHEA:37059"/>
        <dbReference type="Rhea" id="RHEA-COMP:10162"/>
        <dbReference type="Rhea" id="RHEA-COMP:10163"/>
        <dbReference type="ChEBI" id="CHEBI:15378"/>
        <dbReference type="ChEBI" id="CHEBI:73682"/>
        <dbReference type="ChEBI" id="CHEBI:74411"/>
        <dbReference type="ChEBI" id="CHEBI:74418"/>
        <dbReference type="ChEBI" id="CHEBI:456215"/>
        <dbReference type="EC" id="2.3.1.234"/>
    </reaction>
</comment>
<comment type="cofactor">
    <cofactor evidence="1">
        <name>Fe(2+)</name>
        <dbReference type="ChEBI" id="CHEBI:29033"/>
    </cofactor>
    <text evidence="1">Binds 1 Fe(2+) ion per subunit.</text>
</comment>
<comment type="subcellular location">
    <subcellularLocation>
        <location evidence="1">Cytoplasm</location>
    </subcellularLocation>
</comment>
<comment type="similarity">
    <text evidence="1">Belongs to the KAE1 / TsaD family.</text>
</comment>
<dbReference type="EC" id="2.3.1.234" evidence="1"/>
<dbReference type="EMBL" id="AM039952">
    <property type="protein sequence ID" value="CAJ25721.1"/>
    <property type="molecule type" value="Genomic_DNA"/>
</dbReference>
<dbReference type="RefSeq" id="WP_011348831.1">
    <property type="nucleotide sequence ID" value="NZ_CP017190.1"/>
</dbReference>
<dbReference type="SMR" id="Q3BNE2"/>
<dbReference type="STRING" id="456327.BJD11_02685"/>
<dbReference type="KEGG" id="xcv:XCV3990"/>
<dbReference type="eggNOG" id="COG0533">
    <property type="taxonomic scope" value="Bacteria"/>
</dbReference>
<dbReference type="HOGENOM" id="CLU_023208_0_0_6"/>
<dbReference type="Proteomes" id="UP000007069">
    <property type="component" value="Chromosome"/>
</dbReference>
<dbReference type="GO" id="GO:0005737">
    <property type="term" value="C:cytoplasm"/>
    <property type="evidence" value="ECO:0007669"/>
    <property type="project" value="UniProtKB-SubCell"/>
</dbReference>
<dbReference type="GO" id="GO:0005506">
    <property type="term" value="F:iron ion binding"/>
    <property type="evidence" value="ECO:0007669"/>
    <property type="project" value="UniProtKB-UniRule"/>
</dbReference>
<dbReference type="GO" id="GO:0061711">
    <property type="term" value="F:N(6)-L-threonylcarbamoyladenine synthase activity"/>
    <property type="evidence" value="ECO:0007669"/>
    <property type="project" value="UniProtKB-EC"/>
</dbReference>
<dbReference type="GO" id="GO:0002949">
    <property type="term" value="P:tRNA threonylcarbamoyladenosine modification"/>
    <property type="evidence" value="ECO:0007669"/>
    <property type="project" value="UniProtKB-UniRule"/>
</dbReference>
<dbReference type="CDD" id="cd24133">
    <property type="entry name" value="ASKHA_NBD_TsaD_bac"/>
    <property type="match status" value="1"/>
</dbReference>
<dbReference type="FunFam" id="3.30.420.40:FF:000012">
    <property type="entry name" value="tRNA N6-adenosine threonylcarbamoyltransferase"/>
    <property type="match status" value="1"/>
</dbReference>
<dbReference type="FunFam" id="3.30.420.40:FF:000031">
    <property type="entry name" value="tRNA N6-adenosine threonylcarbamoyltransferase"/>
    <property type="match status" value="1"/>
</dbReference>
<dbReference type="Gene3D" id="3.30.420.40">
    <property type="match status" value="2"/>
</dbReference>
<dbReference type="HAMAP" id="MF_01445">
    <property type="entry name" value="TsaD"/>
    <property type="match status" value="1"/>
</dbReference>
<dbReference type="InterPro" id="IPR043129">
    <property type="entry name" value="ATPase_NBD"/>
</dbReference>
<dbReference type="InterPro" id="IPR000905">
    <property type="entry name" value="Gcp-like_dom"/>
</dbReference>
<dbReference type="InterPro" id="IPR017861">
    <property type="entry name" value="KAE1/TsaD"/>
</dbReference>
<dbReference type="InterPro" id="IPR017860">
    <property type="entry name" value="Peptidase_M22_CS"/>
</dbReference>
<dbReference type="InterPro" id="IPR022450">
    <property type="entry name" value="TsaD"/>
</dbReference>
<dbReference type="NCBIfam" id="TIGR00329">
    <property type="entry name" value="gcp_kae1"/>
    <property type="match status" value="1"/>
</dbReference>
<dbReference type="NCBIfam" id="TIGR03723">
    <property type="entry name" value="T6A_TsaD_YgjD"/>
    <property type="match status" value="1"/>
</dbReference>
<dbReference type="PANTHER" id="PTHR11735">
    <property type="entry name" value="TRNA N6-ADENOSINE THREONYLCARBAMOYLTRANSFERASE"/>
    <property type="match status" value="1"/>
</dbReference>
<dbReference type="PANTHER" id="PTHR11735:SF6">
    <property type="entry name" value="TRNA N6-ADENOSINE THREONYLCARBAMOYLTRANSFERASE, MITOCHONDRIAL"/>
    <property type="match status" value="1"/>
</dbReference>
<dbReference type="Pfam" id="PF00814">
    <property type="entry name" value="TsaD"/>
    <property type="match status" value="1"/>
</dbReference>
<dbReference type="PRINTS" id="PR00789">
    <property type="entry name" value="OSIALOPTASE"/>
</dbReference>
<dbReference type="SUPFAM" id="SSF53067">
    <property type="entry name" value="Actin-like ATPase domain"/>
    <property type="match status" value="2"/>
</dbReference>
<dbReference type="PROSITE" id="PS01016">
    <property type="entry name" value="GLYCOPROTEASE"/>
    <property type="match status" value="1"/>
</dbReference>
<keyword id="KW-0012">Acyltransferase</keyword>
<keyword id="KW-0963">Cytoplasm</keyword>
<keyword id="KW-0408">Iron</keyword>
<keyword id="KW-0479">Metal-binding</keyword>
<keyword id="KW-0808">Transferase</keyword>
<keyword id="KW-0819">tRNA processing</keyword>
<protein>
    <recommendedName>
        <fullName evidence="1">tRNA N6-adenosine threonylcarbamoyltransferase</fullName>
        <ecNumber evidence="1">2.3.1.234</ecNumber>
    </recommendedName>
    <alternativeName>
        <fullName evidence="1">N6-L-threonylcarbamoyladenine synthase</fullName>
        <shortName evidence="1">t(6)A synthase</shortName>
    </alternativeName>
    <alternativeName>
        <fullName evidence="1">t(6)A37 threonylcarbamoyladenosine biosynthesis protein TsaD</fullName>
    </alternativeName>
    <alternativeName>
        <fullName evidence="1">tRNA threonylcarbamoyladenosine biosynthesis protein TsaD</fullName>
    </alternativeName>
</protein>
<accession>Q3BNE2</accession>
<organism>
    <name type="scientific">Xanthomonas euvesicatoria pv. vesicatoria (strain 85-10)</name>
    <name type="common">Xanthomonas campestris pv. vesicatoria</name>
    <dbReference type="NCBI Taxonomy" id="316273"/>
    <lineage>
        <taxon>Bacteria</taxon>
        <taxon>Pseudomonadati</taxon>
        <taxon>Pseudomonadota</taxon>
        <taxon>Gammaproteobacteria</taxon>
        <taxon>Lysobacterales</taxon>
        <taxon>Lysobacteraceae</taxon>
        <taxon>Xanthomonas</taxon>
    </lineage>
</organism>
<feature type="chain" id="PRO_0000303618" description="tRNA N6-adenosine threonylcarbamoyltransferase">
    <location>
        <begin position="1"/>
        <end position="353"/>
    </location>
</feature>
<feature type="binding site" evidence="1">
    <location>
        <position position="115"/>
    </location>
    <ligand>
        <name>Fe cation</name>
        <dbReference type="ChEBI" id="CHEBI:24875"/>
    </ligand>
</feature>
<feature type="binding site" evidence="1">
    <location>
        <position position="119"/>
    </location>
    <ligand>
        <name>Fe cation</name>
        <dbReference type="ChEBI" id="CHEBI:24875"/>
    </ligand>
</feature>
<feature type="binding site" evidence="1">
    <location>
        <begin position="138"/>
        <end position="142"/>
    </location>
    <ligand>
        <name>substrate</name>
    </ligand>
</feature>
<feature type="binding site" evidence="1">
    <location>
        <position position="171"/>
    </location>
    <ligand>
        <name>substrate</name>
    </ligand>
</feature>
<feature type="binding site" evidence="1">
    <location>
        <position position="184"/>
    </location>
    <ligand>
        <name>substrate</name>
    </ligand>
</feature>
<feature type="binding site" evidence="1">
    <location>
        <position position="276"/>
    </location>
    <ligand>
        <name>substrate</name>
    </ligand>
</feature>
<feature type="binding site" evidence="1">
    <location>
        <position position="304"/>
    </location>
    <ligand>
        <name>Fe cation</name>
        <dbReference type="ChEBI" id="CHEBI:24875"/>
    </ligand>
</feature>
<reference key="1">
    <citation type="journal article" date="2005" name="J. Bacteriol.">
        <title>Insights into genome plasticity and pathogenicity of the plant pathogenic Bacterium Xanthomonas campestris pv. vesicatoria revealed by the complete genome sequence.</title>
        <authorList>
            <person name="Thieme F."/>
            <person name="Koebnik R."/>
            <person name="Bekel T."/>
            <person name="Berger C."/>
            <person name="Boch J."/>
            <person name="Buettner D."/>
            <person name="Caldana C."/>
            <person name="Gaigalat L."/>
            <person name="Goesmann A."/>
            <person name="Kay S."/>
            <person name="Kirchner O."/>
            <person name="Lanz C."/>
            <person name="Linke B."/>
            <person name="McHardy A.C."/>
            <person name="Meyer F."/>
            <person name="Mittenhuber G."/>
            <person name="Nies D.H."/>
            <person name="Niesbach-Kloesgen U."/>
            <person name="Patschkowski T."/>
            <person name="Rueckert C."/>
            <person name="Rupp O."/>
            <person name="Schneiker S."/>
            <person name="Schuster S.C."/>
            <person name="Vorhoelter F.J."/>
            <person name="Weber E."/>
            <person name="Puehler A."/>
            <person name="Bonas U."/>
            <person name="Bartels D."/>
            <person name="Kaiser O."/>
        </authorList>
    </citation>
    <scope>NUCLEOTIDE SEQUENCE [LARGE SCALE GENOMIC DNA]</scope>
    <source>
        <strain>85-10</strain>
    </source>
</reference>